<sequence>MCLRIGGLNVDEFRKLLMKTGLVLVVLGHVSFIAAAVLHGTMLRFVATTRDAVVLQYCVVDILSVTSAIVVILAGISAVILSRYLPSTPLRWTVFSLSVACALLSLTCALGLLASIAVTFATKGRALLAPCTFENTELPTLAPDCPFDPTRIYSSSLCLWAISLIFCLAESMSAVRCAQLVHRLLELRPWWGKSCHHTIQASPEPLDGHDLLSCTS</sequence>
<evidence type="ECO:0000255" key="1"/>
<evidence type="ECO:0000305" key="2"/>
<organism>
    <name type="scientific">Rattus norvegicus</name>
    <name type="common">Rat</name>
    <dbReference type="NCBI Taxonomy" id="10116"/>
    <lineage>
        <taxon>Eukaryota</taxon>
        <taxon>Metazoa</taxon>
        <taxon>Chordata</taxon>
        <taxon>Craniata</taxon>
        <taxon>Vertebrata</taxon>
        <taxon>Euteleostomi</taxon>
        <taxon>Mammalia</taxon>
        <taxon>Eutheria</taxon>
        <taxon>Euarchontoglires</taxon>
        <taxon>Glires</taxon>
        <taxon>Rodentia</taxon>
        <taxon>Myomorpha</taxon>
        <taxon>Muroidea</taxon>
        <taxon>Muridae</taxon>
        <taxon>Murinae</taxon>
        <taxon>Rattus</taxon>
    </lineage>
</organism>
<name>TMM54_RAT</name>
<proteinExistence type="evidence at transcript level"/>
<dbReference type="EMBL" id="BC101399">
    <property type="protein sequence ID" value="AAI01400.1"/>
    <property type="molecule type" value="mRNA"/>
</dbReference>
<dbReference type="RefSeq" id="NP_001029323.1">
    <property type="nucleotide sequence ID" value="NM_001034151.1"/>
</dbReference>
<dbReference type="FunCoup" id="Q494T4">
    <property type="interactions" value="23"/>
</dbReference>
<dbReference type="STRING" id="10116.ENSRNOP00000033444"/>
<dbReference type="PhosphoSitePlus" id="Q494T4"/>
<dbReference type="PaxDb" id="10116-ENSRNOP00000033444"/>
<dbReference type="Ensembl" id="ENSRNOT00000109320.1">
    <property type="protein sequence ID" value="ENSRNOP00000089316.1"/>
    <property type="gene ID" value="ENSRNOG00000024259.7"/>
</dbReference>
<dbReference type="GeneID" id="362605"/>
<dbReference type="KEGG" id="rno:362605"/>
<dbReference type="AGR" id="RGD:1304886"/>
<dbReference type="CTD" id="113452"/>
<dbReference type="RGD" id="1304886">
    <property type="gene designation" value="Tmem54"/>
</dbReference>
<dbReference type="eggNOG" id="ENOG502S0UN">
    <property type="taxonomic scope" value="Eukaryota"/>
</dbReference>
<dbReference type="GeneTree" id="ENSGT00390000004700"/>
<dbReference type="HOGENOM" id="CLU_089663_1_0_1"/>
<dbReference type="InParanoid" id="Q494T4"/>
<dbReference type="OMA" id="YVAGPHD"/>
<dbReference type="OrthoDB" id="9389418at2759"/>
<dbReference type="PhylomeDB" id="Q494T4"/>
<dbReference type="TreeFam" id="TF332771"/>
<dbReference type="PRO" id="PR:Q494T4"/>
<dbReference type="Proteomes" id="UP000002494">
    <property type="component" value="Chromosome 5"/>
</dbReference>
<dbReference type="Bgee" id="ENSRNOG00000024259">
    <property type="expression patterns" value="Expressed in duodenum and 11 other cell types or tissues"/>
</dbReference>
<dbReference type="GO" id="GO:0016020">
    <property type="term" value="C:membrane"/>
    <property type="evidence" value="ECO:0007669"/>
    <property type="project" value="UniProtKB-SubCell"/>
</dbReference>
<dbReference type="InterPro" id="IPR020977">
    <property type="entry name" value="Beta-casein-like"/>
</dbReference>
<dbReference type="PANTHER" id="PTHR31258">
    <property type="entry name" value="KERATINOCYTE-ASSOCIATED PROTEIN 3"/>
    <property type="match status" value="1"/>
</dbReference>
<dbReference type="PANTHER" id="PTHR31258:SF2">
    <property type="entry name" value="TRANSMEMBRANE PROTEIN 54"/>
    <property type="match status" value="1"/>
</dbReference>
<dbReference type="Pfam" id="PF12304">
    <property type="entry name" value="BCLP"/>
    <property type="match status" value="1"/>
</dbReference>
<reference key="1">
    <citation type="journal article" date="2004" name="Genome Res.">
        <title>The status, quality, and expansion of the NIH full-length cDNA project: the Mammalian Gene Collection (MGC).</title>
        <authorList>
            <consortium name="The MGC Project Team"/>
        </authorList>
    </citation>
    <scope>NUCLEOTIDE SEQUENCE [LARGE SCALE MRNA]</scope>
    <source>
        <tissue>Prostate</tissue>
    </source>
</reference>
<protein>
    <recommendedName>
        <fullName>Transmembrane protein 54</fullName>
    </recommendedName>
</protein>
<gene>
    <name type="primary">Tmem54</name>
</gene>
<accession>Q494T4</accession>
<feature type="chain" id="PRO_0000226991" description="Transmembrane protein 54">
    <location>
        <begin position="1"/>
        <end position="216"/>
    </location>
</feature>
<feature type="transmembrane region" description="Helical" evidence="1">
    <location>
        <begin position="22"/>
        <end position="42"/>
    </location>
</feature>
<feature type="transmembrane region" description="Helical" evidence="1">
    <location>
        <begin position="62"/>
        <end position="82"/>
    </location>
</feature>
<feature type="transmembrane region" description="Helical" evidence="1">
    <location>
        <begin position="94"/>
        <end position="114"/>
    </location>
</feature>
<feature type="transmembrane region" description="Helical" evidence="1">
    <location>
        <begin position="155"/>
        <end position="175"/>
    </location>
</feature>
<comment type="subcellular location">
    <subcellularLocation>
        <location evidence="2">Membrane</location>
        <topology evidence="2">Multi-pass membrane protein</topology>
    </subcellularLocation>
</comment>
<comment type="similarity">
    <text evidence="2">Belongs to the TMEM54 family.</text>
</comment>
<keyword id="KW-0472">Membrane</keyword>
<keyword id="KW-1185">Reference proteome</keyword>
<keyword id="KW-0812">Transmembrane</keyword>
<keyword id="KW-1133">Transmembrane helix</keyword>